<feature type="chain" id="PRO_0000097050" description="Anticodon nuclease">
    <location>
        <begin position="1"/>
        <end position="396"/>
    </location>
</feature>
<gene>
    <name evidence="2" type="primary">prrC</name>
    <name evidence="2" type="synonym">orfC</name>
</gene>
<name>PRRC_ECOLX</name>
<evidence type="ECO:0000269" key="1">
    <source>
    </source>
</evidence>
<evidence type="ECO:0000303" key="2">
    <source>
    </source>
</evidence>
<evidence type="ECO:0000305" key="3">
    <source>
    </source>
</evidence>
<accession>P17223</accession>
<organism>
    <name type="scientific">Escherichia coli</name>
    <dbReference type="NCBI Taxonomy" id="562"/>
    <lineage>
        <taxon>Bacteria</taxon>
        <taxon>Pseudomonadati</taxon>
        <taxon>Pseudomonadota</taxon>
        <taxon>Gammaproteobacteria</taxon>
        <taxon>Enterobacterales</taxon>
        <taxon>Enterobacteriaceae</taxon>
        <taxon>Escherichia</taxon>
    </lineage>
</organism>
<sequence length="396" mass="45568">MGKTLSEIAQQLSTPQKVKKTVHKEVEATRAVPKVQLIYAFNGTGKTRLSRDFKQLLESKVHDGEGEDEAEQSALSRKKILYYNAFTEDLFYWDNDLQEDAEPKLKVQPNSYTNWLLTLLKDLGQDSNIVRYFQRYANDKLTPHFNPDFTEITFSMERGNDERSAHIKLSKGEESNFIWSVFYTLLDQVVTILNVADPDARETHAFDQLKYVFIDDPVSSLDDNHLIELAVNLAGLIKSSESDLKFIITTHSPIFYNVLFNELNGKVCYMLESFEDGTFALTEKYGDSNKSFSYHLHLKQTIEQAIADNNVERYHFTLLRNLYEKTASFLGYPKWSELLPDDKQLYLSRIINFTSHSTLSNEAVAEPTPAEKATVKLLLDHLKNNCGFWQQEQKNG</sequence>
<proteinExistence type="predicted"/>
<comment type="function">
    <text evidence="1 3">Anticodon endonuclease (ACNase) that triggers the cleavage ligation of tRNA(Lys). It is activated by T4 stp protein and masked by the prrD protein (the endonuclease subunit of EcoprrI) (PubMed:1691706). The prr locus restricts phage T4 mutants lacking polynucleotide kinase or RNA ligase; T4 mutants lacking these genes manifest a T4-induced anticodon nuclease (ACNase). It is thought that Stp and other T4-encoded ACNase factors counteract the masking agents, thus activating the latent ACNase (Probable).</text>
</comment>
<comment type="disruption phenotype">
    <text evidence="1">Loss of ACNase activity.</text>
</comment>
<protein>
    <recommendedName>
        <fullName evidence="2">Anticodon nuclease</fullName>
        <shortName evidence="2">ACNase</shortName>
        <ecNumber evidence="1">3.1.-.-</ecNumber>
    </recommendedName>
    <alternativeName>
        <fullName evidence="2">Phage-less ACNase</fullName>
    </alternativeName>
</protein>
<reference key="1">
    <citation type="journal article" date="1990" name="EMBO J.">
        <title>The optional E. coli prr locus encodes a latent form of phage T4-induced anticodon nuclease.</title>
        <authorList>
            <person name="Levitz R."/>
            <person name="Chapman D."/>
            <person name="Amitsur M."/>
            <person name="Green R."/>
            <person name="Snyder L."/>
            <person name="Kaufmann G."/>
        </authorList>
    </citation>
    <scope>NUCLEOTIDE SEQUENCE [GENOMIC DNA]</scope>
    <scope>FUNCTION</scope>
    <scope>DISRUPTION PHENOTYPE</scope>
    <source>
        <strain>CTR5X</strain>
    </source>
</reference>
<dbReference type="EC" id="3.1.-.-" evidence="1"/>
<dbReference type="EMBL" id="X52284">
    <property type="protein sequence ID" value="CAA36527.1"/>
    <property type="molecule type" value="Genomic_DNA"/>
</dbReference>
<dbReference type="PIR" id="S09627">
    <property type="entry name" value="S09627"/>
</dbReference>
<dbReference type="RefSeq" id="WP_032251799.1">
    <property type="nucleotide sequence ID" value="NZ_NWAV01000016.1"/>
</dbReference>
<dbReference type="GO" id="GO:0004519">
    <property type="term" value="F:endonuclease activity"/>
    <property type="evidence" value="ECO:0007669"/>
    <property type="project" value="UniProtKB-KW"/>
</dbReference>
<dbReference type="Gene3D" id="3.40.50.300">
    <property type="entry name" value="P-loop containing nucleotide triphosphate hydrolases"/>
    <property type="match status" value="1"/>
</dbReference>
<dbReference type="InterPro" id="IPR027417">
    <property type="entry name" value="P-loop_NTPase"/>
</dbReference>
<dbReference type="SUPFAM" id="SSF52540">
    <property type="entry name" value="P-loop containing nucleoside triphosphate hydrolases"/>
    <property type="match status" value="1"/>
</dbReference>
<keyword id="KW-0255">Endonuclease</keyword>
<keyword id="KW-0378">Hydrolase</keyword>
<keyword id="KW-0540">Nuclease</keyword>